<evidence type="ECO:0000250" key="1"/>
<evidence type="ECO:0000269" key="2">
    <source>
    </source>
</evidence>
<evidence type="ECO:0000305" key="3"/>
<sequence length="240" mass="26738">MTKITLFPHNFRIQKQEATPLKEKSTEKNSLAKSILAVKNHFIKLNSKLSERFISHKNTESSATHFHRGSASEGRAVLTNKVVKNFMLQTLHDIDIRGSASKDPAYASQTREAILSAVYSKYKDQYCNLLISKGIDIAPFLKEIGEAAQNAGLPGATKNDVFSPSGAGANPFITPLITSAYSKYPHMFTSQHQKASFNIYAEKIIMTEVVPLFNECAMPTPQQFQQILENIANKYIQNTP</sequence>
<dbReference type="EMBL" id="L78932">
    <property type="protein sequence ID" value="AAB51429.1"/>
    <property type="molecule type" value="Genomic_DNA"/>
</dbReference>
<dbReference type="SMR" id="O06949"/>
<dbReference type="GO" id="GO:0005576">
    <property type="term" value="C:extracellular region"/>
    <property type="evidence" value="ECO:0007669"/>
    <property type="project" value="UniProtKB-SubCell"/>
</dbReference>
<dbReference type="GO" id="GO:0005096">
    <property type="term" value="F:GTPase activator activity"/>
    <property type="evidence" value="ECO:0007669"/>
    <property type="project" value="UniProtKB-KW"/>
</dbReference>
<dbReference type="GO" id="GO:0005085">
    <property type="term" value="F:guanyl-nucleotide exchange factor activity"/>
    <property type="evidence" value="ECO:0007669"/>
    <property type="project" value="UniProtKB-KW"/>
</dbReference>
<dbReference type="GO" id="GO:0030036">
    <property type="term" value="P:actin cytoskeleton organization"/>
    <property type="evidence" value="ECO:0007669"/>
    <property type="project" value="InterPro"/>
</dbReference>
<dbReference type="Gene3D" id="1.10.4120.10">
    <property type="entry name" value="SopE-like, GEF domain"/>
    <property type="match status" value="1"/>
</dbReference>
<dbReference type="InterPro" id="IPR005414">
    <property type="entry name" value="SopE"/>
</dbReference>
<dbReference type="InterPro" id="IPR035949">
    <property type="entry name" value="SopE-like_GEF_dom_sf"/>
</dbReference>
<dbReference type="InterPro" id="IPR016019">
    <property type="entry name" value="SopE_GEF_dom"/>
</dbReference>
<dbReference type="InterPro" id="IPR016018">
    <property type="entry name" value="SopE_N_dom"/>
</dbReference>
<dbReference type="NCBIfam" id="NF011809">
    <property type="entry name" value="PRK15279.1"/>
    <property type="match status" value="1"/>
</dbReference>
<dbReference type="NCBIfam" id="NF011810">
    <property type="entry name" value="PRK15280.1"/>
    <property type="match status" value="1"/>
</dbReference>
<dbReference type="Pfam" id="PF05364">
    <property type="entry name" value="SecIII_SopE_N"/>
    <property type="match status" value="1"/>
</dbReference>
<dbReference type="Pfam" id="PF07487">
    <property type="entry name" value="SopE_GEF"/>
    <property type="match status" value="1"/>
</dbReference>
<dbReference type="PIRSF" id="PIRSF034781">
    <property type="entry name" value="SecIII_sopE"/>
    <property type="match status" value="1"/>
</dbReference>
<dbReference type="PRINTS" id="PR01593">
    <property type="entry name" value="SOPEPROTEIN"/>
</dbReference>
<dbReference type="SUPFAM" id="SSF81832">
    <property type="entry name" value="SopE-like GEF domain"/>
    <property type="match status" value="1"/>
</dbReference>
<accession>O06949</accession>
<organism>
    <name type="scientific">Salmonella dublin</name>
    <dbReference type="NCBI Taxonomy" id="98360"/>
    <lineage>
        <taxon>Bacteria</taxon>
        <taxon>Pseudomonadati</taxon>
        <taxon>Pseudomonadota</taxon>
        <taxon>Gammaproteobacteria</taxon>
        <taxon>Enterobacterales</taxon>
        <taxon>Enterobacteriaceae</taxon>
        <taxon>Salmonella</taxon>
    </lineage>
</organism>
<comment type="function">
    <text evidence="1">Acts in concert with other proteins to mediate cellular responses leading to bacterial internalization. Activator for both CDC42 and RAC1 by directly engaging these Rho GTPases and acting as potent guanine nucleotide exchange factor (GEF). This activation results in actin cytoskeleton rearrangements and stimulates membrane ruffling, promoting bacterial entry into non-phagocytic cells (By similarity).</text>
</comment>
<comment type="subcellular location">
    <subcellularLocation>
        <location>Secreted</location>
    </subcellularLocation>
    <text>Secreted via the type III secretion system 1 (SPI-1 T3SS).</text>
</comment>
<comment type="miscellaneous">
    <text>Encoded within a lambda-like prophage region with similarity to GIFSY phages.</text>
</comment>
<comment type="similarity">
    <text evidence="3">Belongs to the GEF (guanine exchange factor) SopE family.</text>
</comment>
<gene>
    <name type="primary">sopE</name>
</gene>
<reference key="1">
    <citation type="journal article" date="1996" name="Mol. Microbiol.">
        <title>SopE, a secreted protein of Salmonella dublin, is translocated into the target eukaryotic cell via a sip-dependent mechanism and promotes bacterial entry.</title>
        <authorList>
            <person name="Wood M.W."/>
            <person name="Rosqvist R."/>
            <person name="Mullan P.B."/>
            <person name="Edwards M.H."/>
            <person name="Galyov E.E."/>
        </authorList>
    </citation>
    <scope>NUCLEOTIDE SEQUENCE [GENOMIC DNA]</scope>
    <scope>PROTEIN SEQUENCE OF 2-16; 40-44 AND 184-194</scope>
    <source>
        <strain>2229</strain>
    </source>
</reference>
<reference key="2">
    <citation type="journal article" date="2001" name="J. Mol. Biol.">
        <title>Transfer of the Salmonella type III effector sopE between unrelated phage families.</title>
        <authorList>
            <person name="Mirold S."/>
            <person name="Rabsch W."/>
            <person name="Tschaepe H."/>
            <person name="Hardt W.-D."/>
        </authorList>
    </citation>
    <scope>PROPHAGE-RELATED REGION</scope>
</reference>
<feature type="initiator methionine" description="Removed" evidence="2">
    <location>
        <position position="1"/>
    </location>
</feature>
<feature type="chain" id="PRO_0000220732" description="Guanine nucleotide exchange factor SopE">
    <location>
        <begin position="2"/>
        <end position="240"/>
    </location>
</feature>
<feature type="region of interest" description="GEF catalytic domain" evidence="1">
    <location>
        <begin position="78"/>
        <end position="240"/>
    </location>
</feature>
<name>SOPE_SALDU</name>
<keyword id="KW-0903">Direct protein sequencing</keyword>
<keyword id="KW-0343">GTPase activation</keyword>
<keyword id="KW-0344">Guanine-nucleotide releasing factor</keyword>
<keyword id="KW-0964">Secreted</keyword>
<keyword id="KW-0843">Virulence</keyword>
<proteinExistence type="evidence at protein level"/>
<protein>
    <recommendedName>
        <fullName>Guanine nucleotide exchange factor SopE</fullName>
    </recommendedName>
    <alternativeName>
        <fullName>Effector protein SopE</fullName>
    </alternativeName>
    <alternativeName>
        <fullName>Toxin SopE</fullName>
    </alternativeName>
</protein>